<keyword id="KW-0687">Ribonucleoprotein</keyword>
<keyword id="KW-0689">Ribosomal protein</keyword>
<keyword id="KW-0694">RNA-binding</keyword>
<keyword id="KW-0699">rRNA-binding</keyword>
<evidence type="ECO:0000255" key="1">
    <source>
        <dbReference type="HAMAP-Rule" id="MF_01328"/>
    </source>
</evidence>
<evidence type="ECO:0000256" key="2">
    <source>
        <dbReference type="SAM" id="MobiDB-lite"/>
    </source>
</evidence>
<evidence type="ECO:0000305" key="3"/>
<sequence>MANYDVLKLDGTKSGSIELSDAVFGIEPNNSVLFEAINLQRASLRQGTHAVKNRSAVSGGGRKPWKQKGTGRARQGTIRAPQWRGGGIVFGPTPRSYAYKMPKKMRRLALRSALSFKAQENGLTVVDAFNFEAPKTKEFKNVLSTLEQPKKVLVVTENEDVNVELSARNIPGVQVTTAQGLNVLDITNADSLVITEAAAKKVEEVLG</sequence>
<dbReference type="EMBL" id="CP000046">
    <property type="protein sequence ID" value="AAW37113.1"/>
    <property type="molecule type" value="Genomic_DNA"/>
</dbReference>
<dbReference type="RefSeq" id="WP_000024827.1">
    <property type="nucleotide sequence ID" value="NZ_JBGOFO010000004.1"/>
</dbReference>
<dbReference type="SMR" id="Q5HDV9"/>
<dbReference type="KEGG" id="sac:SACOL2238"/>
<dbReference type="HOGENOM" id="CLU_041575_5_2_9"/>
<dbReference type="Proteomes" id="UP000000530">
    <property type="component" value="Chromosome"/>
</dbReference>
<dbReference type="GO" id="GO:1990904">
    <property type="term" value="C:ribonucleoprotein complex"/>
    <property type="evidence" value="ECO:0007669"/>
    <property type="project" value="UniProtKB-KW"/>
</dbReference>
<dbReference type="GO" id="GO:0005840">
    <property type="term" value="C:ribosome"/>
    <property type="evidence" value="ECO:0007669"/>
    <property type="project" value="UniProtKB-KW"/>
</dbReference>
<dbReference type="GO" id="GO:0019843">
    <property type="term" value="F:rRNA binding"/>
    <property type="evidence" value="ECO:0007669"/>
    <property type="project" value="UniProtKB-UniRule"/>
</dbReference>
<dbReference type="GO" id="GO:0003735">
    <property type="term" value="F:structural constituent of ribosome"/>
    <property type="evidence" value="ECO:0007669"/>
    <property type="project" value="InterPro"/>
</dbReference>
<dbReference type="GO" id="GO:0006412">
    <property type="term" value="P:translation"/>
    <property type="evidence" value="ECO:0007669"/>
    <property type="project" value="UniProtKB-UniRule"/>
</dbReference>
<dbReference type="FunFam" id="3.40.1370.10:FF:000003">
    <property type="entry name" value="50S ribosomal protein L4"/>
    <property type="match status" value="1"/>
</dbReference>
<dbReference type="Gene3D" id="3.40.1370.10">
    <property type="match status" value="1"/>
</dbReference>
<dbReference type="HAMAP" id="MF_01328_B">
    <property type="entry name" value="Ribosomal_uL4_B"/>
    <property type="match status" value="1"/>
</dbReference>
<dbReference type="InterPro" id="IPR002136">
    <property type="entry name" value="Ribosomal_uL4"/>
</dbReference>
<dbReference type="InterPro" id="IPR013005">
    <property type="entry name" value="Ribosomal_uL4-like"/>
</dbReference>
<dbReference type="InterPro" id="IPR023574">
    <property type="entry name" value="Ribosomal_uL4_dom_sf"/>
</dbReference>
<dbReference type="NCBIfam" id="TIGR03953">
    <property type="entry name" value="rplD_bact"/>
    <property type="match status" value="1"/>
</dbReference>
<dbReference type="PANTHER" id="PTHR10746">
    <property type="entry name" value="50S RIBOSOMAL PROTEIN L4"/>
    <property type="match status" value="1"/>
</dbReference>
<dbReference type="PANTHER" id="PTHR10746:SF6">
    <property type="entry name" value="LARGE RIBOSOMAL SUBUNIT PROTEIN UL4M"/>
    <property type="match status" value="1"/>
</dbReference>
<dbReference type="Pfam" id="PF00573">
    <property type="entry name" value="Ribosomal_L4"/>
    <property type="match status" value="1"/>
</dbReference>
<dbReference type="SUPFAM" id="SSF52166">
    <property type="entry name" value="Ribosomal protein L4"/>
    <property type="match status" value="1"/>
</dbReference>
<gene>
    <name evidence="1" type="primary">rplD</name>
    <name type="ordered locus">SACOL2238</name>
</gene>
<comment type="function">
    <text evidence="1">One of the primary rRNA binding proteins, this protein initially binds near the 5'-end of the 23S rRNA. It is important during the early stages of 50S assembly. It makes multiple contacts with different domains of the 23S rRNA in the assembled 50S subunit and ribosome.</text>
</comment>
<comment type="function">
    <text evidence="1">Forms part of the polypeptide exit tunnel.</text>
</comment>
<comment type="subunit">
    <text evidence="1">Part of the 50S ribosomal subunit.</text>
</comment>
<comment type="similarity">
    <text evidence="1">Belongs to the universal ribosomal protein uL4 family.</text>
</comment>
<accession>Q5HDV9</accession>
<proteinExistence type="inferred from homology"/>
<reference key="1">
    <citation type="journal article" date="2005" name="J. Bacteriol.">
        <title>Insights on evolution of virulence and resistance from the complete genome analysis of an early methicillin-resistant Staphylococcus aureus strain and a biofilm-producing methicillin-resistant Staphylococcus epidermidis strain.</title>
        <authorList>
            <person name="Gill S.R."/>
            <person name="Fouts D.E."/>
            <person name="Archer G.L."/>
            <person name="Mongodin E.F."/>
            <person name="DeBoy R.T."/>
            <person name="Ravel J."/>
            <person name="Paulsen I.T."/>
            <person name="Kolonay J.F."/>
            <person name="Brinkac L.M."/>
            <person name="Beanan M.J."/>
            <person name="Dodson R.J."/>
            <person name="Daugherty S.C."/>
            <person name="Madupu R."/>
            <person name="Angiuoli S.V."/>
            <person name="Durkin A.S."/>
            <person name="Haft D.H."/>
            <person name="Vamathevan J.J."/>
            <person name="Khouri H."/>
            <person name="Utterback T.R."/>
            <person name="Lee C."/>
            <person name="Dimitrov G."/>
            <person name="Jiang L."/>
            <person name="Qin H."/>
            <person name="Weidman J."/>
            <person name="Tran K."/>
            <person name="Kang K.H."/>
            <person name="Hance I.R."/>
            <person name="Nelson K.E."/>
            <person name="Fraser C.M."/>
        </authorList>
    </citation>
    <scope>NUCLEOTIDE SEQUENCE [LARGE SCALE GENOMIC DNA]</scope>
    <source>
        <strain>COL</strain>
    </source>
</reference>
<protein>
    <recommendedName>
        <fullName evidence="1">Large ribosomal subunit protein uL4</fullName>
    </recommendedName>
    <alternativeName>
        <fullName evidence="3">50S ribosomal protein L4</fullName>
    </alternativeName>
</protein>
<name>RL4_STAAC</name>
<feature type="chain" id="PRO_0000129274" description="Large ribosomal subunit protein uL4">
    <location>
        <begin position="1"/>
        <end position="207"/>
    </location>
</feature>
<feature type="region of interest" description="Disordered" evidence="2">
    <location>
        <begin position="50"/>
        <end position="76"/>
    </location>
</feature>
<organism>
    <name type="scientific">Staphylococcus aureus (strain COL)</name>
    <dbReference type="NCBI Taxonomy" id="93062"/>
    <lineage>
        <taxon>Bacteria</taxon>
        <taxon>Bacillati</taxon>
        <taxon>Bacillota</taxon>
        <taxon>Bacilli</taxon>
        <taxon>Bacillales</taxon>
        <taxon>Staphylococcaceae</taxon>
        <taxon>Staphylococcus</taxon>
    </lineage>
</organism>